<evidence type="ECO:0000255" key="1">
    <source>
        <dbReference type="PROSITE-ProRule" id="PRU00041"/>
    </source>
</evidence>
<evidence type="ECO:0000255" key="2">
    <source>
        <dbReference type="PROSITE-ProRule" id="PRU00159"/>
    </source>
</evidence>
<evidence type="ECO:0000255" key="3">
    <source>
        <dbReference type="PROSITE-ProRule" id="PRU00226"/>
    </source>
</evidence>
<evidence type="ECO:0000255" key="4">
    <source>
        <dbReference type="PROSITE-ProRule" id="PRU00618"/>
    </source>
</evidence>
<evidence type="ECO:0000255" key="5">
    <source>
        <dbReference type="PROSITE-ProRule" id="PRU01207"/>
    </source>
</evidence>
<evidence type="ECO:0000255" key="6">
    <source>
        <dbReference type="PROSITE-ProRule" id="PRU10027"/>
    </source>
</evidence>
<evidence type="ECO:0000256" key="7">
    <source>
        <dbReference type="SAM" id="MobiDB-lite"/>
    </source>
</evidence>
<evidence type="ECO:0000305" key="8"/>
<name>KPC1_NEUCR</name>
<accession>P87253</accession>
<accession>Q7RVG4</accession>
<keyword id="KW-0067">ATP-binding</keyword>
<keyword id="KW-0175">Coiled coil</keyword>
<keyword id="KW-0418">Kinase</keyword>
<keyword id="KW-0479">Metal-binding</keyword>
<keyword id="KW-0547">Nucleotide-binding</keyword>
<keyword id="KW-0597">Phosphoprotein</keyword>
<keyword id="KW-1185">Reference proteome</keyword>
<keyword id="KW-0677">Repeat</keyword>
<keyword id="KW-0723">Serine/threonine-protein kinase</keyword>
<keyword id="KW-0808">Transferase</keyword>
<keyword id="KW-0862">Zinc</keyword>
<keyword id="KW-0863">Zinc-finger</keyword>
<feature type="chain" id="PRO_0000055744" description="Protein kinase C-like">
    <location>
        <begin position="1"/>
        <end position="1142"/>
    </location>
</feature>
<feature type="domain" description="REM-1 1" evidence="5">
    <location>
        <begin position="1"/>
        <end position="67"/>
    </location>
</feature>
<feature type="domain" description="REM-1 2" evidence="5">
    <location>
        <begin position="149"/>
        <end position="226"/>
    </location>
</feature>
<feature type="domain" description="C2" evidence="1">
    <location>
        <begin position="231"/>
        <end position="349"/>
    </location>
</feature>
<feature type="domain" description="Protein kinase" evidence="2">
    <location>
        <begin position="817"/>
        <end position="1076"/>
    </location>
</feature>
<feature type="domain" description="AGC-kinase C-terminal" evidence="4">
    <location>
        <begin position="1077"/>
        <end position="1142"/>
    </location>
</feature>
<feature type="zinc finger region" description="Phorbol-ester/DAG-type 1" evidence="3">
    <location>
        <begin position="457"/>
        <end position="505"/>
    </location>
</feature>
<feature type="zinc finger region" description="Phorbol-ester/DAG-type 2" evidence="3">
    <location>
        <begin position="525"/>
        <end position="576"/>
    </location>
</feature>
<feature type="region of interest" description="Disordered" evidence="7">
    <location>
        <begin position="70"/>
        <end position="139"/>
    </location>
</feature>
<feature type="region of interest" description="Disordered" evidence="7">
    <location>
        <begin position="357"/>
        <end position="403"/>
    </location>
</feature>
<feature type="region of interest" description="Disordered" evidence="7">
    <location>
        <begin position="592"/>
        <end position="622"/>
    </location>
</feature>
<feature type="region of interest" description="Disordered" evidence="7">
    <location>
        <begin position="651"/>
        <end position="807"/>
    </location>
</feature>
<feature type="compositionally biased region" description="Polar residues" evidence="7">
    <location>
        <begin position="385"/>
        <end position="394"/>
    </location>
</feature>
<feature type="compositionally biased region" description="Polar residues" evidence="7">
    <location>
        <begin position="613"/>
        <end position="622"/>
    </location>
</feature>
<feature type="compositionally biased region" description="Low complexity" evidence="7">
    <location>
        <begin position="663"/>
        <end position="677"/>
    </location>
</feature>
<feature type="compositionally biased region" description="Low complexity" evidence="7">
    <location>
        <begin position="712"/>
        <end position="724"/>
    </location>
</feature>
<feature type="compositionally biased region" description="Low complexity" evidence="7">
    <location>
        <begin position="741"/>
        <end position="765"/>
    </location>
</feature>
<feature type="active site" description="Proton acceptor" evidence="2 6">
    <location>
        <position position="942"/>
    </location>
</feature>
<feature type="binding site" evidence="2">
    <location>
        <begin position="823"/>
        <end position="831"/>
    </location>
    <ligand>
        <name>ATP</name>
        <dbReference type="ChEBI" id="CHEBI:30616"/>
    </ligand>
</feature>
<feature type="binding site" evidence="2">
    <location>
        <position position="846"/>
    </location>
    <ligand>
        <name>ATP</name>
        <dbReference type="ChEBI" id="CHEBI:30616"/>
    </ligand>
</feature>
<feature type="sequence conflict" description="In Ref. 1; CAA72731." evidence="8" ref="1">
    <original>F</original>
    <variation>L</variation>
    <location>
        <position position="914"/>
    </location>
</feature>
<feature type="sequence conflict" description="In Ref. 1; CAA72731." evidence="8" ref="1">
    <original>EP</original>
    <variation>DA</variation>
    <location>
        <begin position="1055"/>
        <end position="1056"/>
    </location>
</feature>
<comment type="catalytic activity">
    <reaction>
        <text>L-seryl-[protein] + ATP = O-phospho-L-seryl-[protein] + ADP + H(+)</text>
        <dbReference type="Rhea" id="RHEA:17989"/>
        <dbReference type="Rhea" id="RHEA-COMP:9863"/>
        <dbReference type="Rhea" id="RHEA-COMP:11604"/>
        <dbReference type="ChEBI" id="CHEBI:15378"/>
        <dbReference type="ChEBI" id="CHEBI:29999"/>
        <dbReference type="ChEBI" id="CHEBI:30616"/>
        <dbReference type="ChEBI" id="CHEBI:83421"/>
        <dbReference type="ChEBI" id="CHEBI:456216"/>
        <dbReference type="EC" id="2.7.11.13"/>
    </reaction>
</comment>
<comment type="catalytic activity">
    <reaction>
        <text>L-threonyl-[protein] + ATP = O-phospho-L-threonyl-[protein] + ADP + H(+)</text>
        <dbReference type="Rhea" id="RHEA:46608"/>
        <dbReference type="Rhea" id="RHEA-COMP:11060"/>
        <dbReference type="Rhea" id="RHEA-COMP:11605"/>
        <dbReference type="ChEBI" id="CHEBI:15378"/>
        <dbReference type="ChEBI" id="CHEBI:30013"/>
        <dbReference type="ChEBI" id="CHEBI:30616"/>
        <dbReference type="ChEBI" id="CHEBI:61977"/>
        <dbReference type="ChEBI" id="CHEBI:456216"/>
        <dbReference type="EC" id="2.7.11.13"/>
    </reaction>
</comment>
<comment type="similarity">
    <text evidence="8">Belongs to the protein kinase superfamily. AGC Ser/Thr protein kinase family. PKC subfamily.</text>
</comment>
<organism>
    <name type="scientific">Neurospora crassa (strain ATCC 24698 / 74-OR23-1A / CBS 708.71 / DSM 1257 / FGSC 987)</name>
    <dbReference type="NCBI Taxonomy" id="367110"/>
    <lineage>
        <taxon>Eukaryota</taxon>
        <taxon>Fungi</taxon>
        <taxon>Dikarya</taxon>
        <taxon>Ascomycota</taxon>
        <taxon>Pezizomycotina</taxon>
        <taxon>Sordariomycetes</taxon>
        <taxon>Sordariomycetidae</taxon>
        <taxon>Sordariales</taxon>
        <taxon>Sordariaceae</taxon>
        <taxon>Neurospora</taxon>
    </lineage>
</organism>
<gene>
    <name type="ORF">NCU06544</name>
</gene>
<sequence>MNDEDKVHDISKKIEREKALINAAQAMRQQTNNEQVRSKLDTQMREGRRNLEFFEEKLRELQMRRLGHGVDNMSLGASPMSGSHRQSVDDFEGYGAPSPPPKEDVRGHSSHQSQGSGPLMPASAPYPGGPPDSNVPRARPNYTRLDLIKFDTPHLGPRIQLMLSQIQFKLNVEEQYLKGIEKMVQLYQMEGDKKSKLDAAAKRVESKQKIVLLKQALKRYEELHIDIDVDGPDDDSINLPALRKPLSGTLSIRILAVKDVDHAPLGRFARSPETFIAVKAEDIVVARTKPSRNDKWEAEFHTFPVDKTNEIEFTVYDKPAEHPVPIAMLWVRISDIVEELRRKKIEAEMTSAGWVSADRVGSRAPPPQFPMGAQSPQFAAPPTSPGSQEQNTMIPPQAPPPSQVVSQPVDGWFNLEPYGQIHLSFNFIKGARPQGMDRLGRKGAVRQRKEEVHEMYGHKFVQKQFYNIMRCALCGDFLKYSAGMQCEDCKYTCHTKCYTSVVTKCISKSNAETDPDEEKINHRIPHRFIPFSNLTANWCCHCGYMLPIGSKKNSRKCSECALTAHAQCVHLVPDFCGMSMAVANQILEGMRTQKKTHKDKASSMSERTLRPGSKTSISSGSIAQASTYSGSTAYTSIASPEATEAAKLMYSQTTPRPGGPDRTSTSSTTASAAAAAAMAPKHSSQPSQAGSIPDFGGSPGYGRPDSRDDEYSAQQQQGYGSPQQRKYNPADYANIDAYSSPQARPQQQQQQQQQTPQQVSPMYQQNPQTPISKPQPVAPSYDNQVVPSASGVPVPTKKPLPSATDPGTGMRIGLDHFNFLAVLGKGNFGKVMLAETKKSRKLYAIKVLKKEFIIENDEVESIRSEKRVFLIANRERHPFLTNLHACFQTETRVYFVMEYISGGDLMLHIQRGMFGTKRAQFYAAEVCLALKYFHENGVIYRDLKLDNILLTLDGHIKIADYGLCKEDMWYGSTTSTFCGTPEFMAPEILLDKKYGRAVDWWAFGVLIYQMLLQQSPFRGEDEDEIYDAILADEPLYPIHMPRDSVSILQKLLTREPDQRLGSGPTDAQEIMSQPFFRNINWDDIYHKRVQPPFLPQIKSATDTSNFDSEFTSVTPVLTPVQSVLSQAMQEEFRGFSYTADFE</sequence>
<dbReference type="EC" id="2.7.11.13"/>
<dbReference type="EMBL" id="Y12002">
    <property type="protein sequence ID" value="CAA72731.1"/>
    <property type="molecule type" value="Genomic_DNA"/>
</dbReference>
<dbReference type="EMBL" id="CM002239">
    <property type="protein sequence ID" value="EAA33015.1"/>
    <property type="molecule type" value="Genomic_DNA"/>
</dbReference>
<dbReference type="SMR" id="P87253"/>
<dbReference type="BioGRID" id="1979838">
    <property type="interactions" value="1"/>
</dbReference>
<dbReference type="FunCoup" id="P87253">
    <property type="interactions" value="400"/>
</dbReference>
<dbReference type="STRING" id="367110.P87253"/>
<dbReference type="PaxDb" id="5141-EFNCRP00000006344"/>
<dbReference type="EnsemblFungi" id="EAA33015">
    <property type="protein sequence ID" value="EAA33015"/>
    <property type="gene ID" value="NCU06544"/>
</dbReference>
<dbReference type="KEGG" id="ncr:NCU06544"/>
<dbReference type="VEuPathDB" id="FungiDB:NCU06544"/>
<dbReference type="HOGENOM" id="CLU_000288_54_0_1"/>
<dbReference type="InParanoid" id="P87253"/>
<dbReference type="OMA" id="QCTHLVP"/>
<dbReference type="OrthoDB" id="63267at2759"/>
<dbReference type="Proteomes" id="UP000001805">
    <property type="component" value="Chromosome 4, Linkage Group IV"/>
</dbReference>
<dbReference type="GO" id="GO:0030428">
    <property type="term" value="C:cell septum"/>
    <property type="evidence" value="ECO:0000314"/>
    <property type="project" value="CACAO"/>
</dbReference>
<dbReference type="GO" id="GO:0010494">
    <property type="term" value="C:cytoplasmic stress granule"/>
    <property type="evidence" value="ECO:0007669"/>
    <property type="project" value="EnsemblFungi"/>
</dbReference>
<dbReference type="GO" id="GO:0005856">
    <property type="term" value="C:cytoskeleton"/>
    <property type="evidence" value="ECO:0007669"/>
    <property type="project" value="EnsemblFungi"/>
</dbReference>
<dbReference type="GO" id="GO:0005634">
    <property type="term" value="C:nucleus"/>
    <property type="evidence" value="ECO:0007669"/>
    <property type="project" value="EnsemblFungi"/>
</dbReference>
<dbReference type="GO" id="GO:0030427">
    <property type="term" value="C:site of polarized growth"/>
    <property type="evidence" value="ECO:0007669"/>
    <property type="project" value="EnsemblFungi"/>
</dbReference>
<dbReference type="GO" id="GO:0005524">
    <property type="term" value="F:ATP binding"/>
    <property type="evidence" value="ECO:0007669"/>
    <property type="project" value="UniProtKB-KW"/>
</dbReference>
<dbReference type="GO" id="GO:0004697">
    <property type="term" value="F:diacylglycerol-dependent serine/threonine kinase activity"/>
    <property type="evidence" value="ECO:0007669"/>
    <property type="project" value="UniProtKB-EC"/>
</dbReference>
<dbReference type="GO" id="GO:0106310">
    <property type="term" value="F:protein serine kinase activity"/>
    <property type="evidence" value="ECO:0007669"/>
    <property type="project" value="RHEA"/>
</dbReference>
<dbReference type="GO" id="GO:0004674">
    <property type="term" value="F:protein serine/threonine kinase activity"/>
    <property type="evidence" value="ECO:0000318"/>
    <property type="project" value="GO_Central"/>
</dbReference>
<dbReference type="GO" id="GO:0008270">
    <property type="term" value="F:zinc ion binding"/>
    <property type="evidence" value="ECO:0007669"/>
    <property type="project" value="UniProtKB-KW"/>
</dbReference>
<dbReference type="GO" id="GO:0009267">
    <property type="term" value="P:cellular response to starvation"/>
    <property type="evidence" value="ECO:0007669"/>
    <property type="project" value="EnsemblFungi"/>
</dbReference>
<dbReference type="GO" id="GO:0009272">
    <property type="term" value="P:fungal-type cell wall biogenesis"/>
    <property type="evidence" value="ECO:0007669"/>
    <property type="project" value="InterPro"/>
</dbReference>
<dbReference type="GO" id="GO:0035556">
    <property type="term" value="P:intracellular signal transduction"/>
    <property type="evidence" value="ECO:0000318"/>
    <property type="project" value="GO_Central"/>
</dbReference>
<dbReference type="GO" id="GO:0000425">
    <property type="term" value="P:pexophagy"/>
    <property type="evidence" value="ECO:0007669"/>
    <property type="project" value="EnsemblFungi"/>
</dbReference>
<dbReference type="GO" id="GO:0010606">
    <property type="term" value="P:positive regulation of cytoplasmic mRNA processing body assembly"/>
    <property type="evidence" value="ECO:0007669"/>
    <property type="project" value="EnsemblFungi"/>
</dbReference>
<dbReference type="GO" id="GO:0060237">
    <property type="term" value="P:regulation of fungal-type cell wall organization"/>
    <property type="evidence" value="ECO:0007669"/>
    <property type="project" value="EnsemblFungi"/>
</dbReference>
<dbReference type="GO" id="GO:0060211">
    <property type="term" value="P:regulation of nuclear-transcribed mRNA poly(A) tail shortening"/>
    <property type="evidence" value="ECO:0007669"/>
    <property type="project" value="EnsemblFungi"/>
</dbReference>
<dbReference type="GO" id="GO:0034063">
    <property type="term" value="P:stress granule assembly"/>
    <property type="evidence" value="ECO:0007669"/>
    <property type="project" value="EnsemblFungi"/>
</dbReference>
<dbReference type="CDD" id="cd20822">
    <property type="entry name" value="C1_ScPKC1-like_rpt1"/>
    <property type="match status" value="1"/>
</dbReference>
<dbReference type="CDD" id="cd20823">
    <property type="entry name" value="C1_ScPKC1-like_rpt2"/>
    <property type="match status" value="1"/>
</dbReference>
<dbReference type="CDD" id="cd08689">
    <property type="entry name" value="C2_fungal_Pkc1p"/>
    <property type="match status" value="1"/>
</dbReference>
<dbReference type="CDD" id="cd11620">
    <property type="entry name" value="HR1_PKC-like_2_fungi"/>
    <property type="match status" value="1"/>
</dbReference>
<dbReference type="CDD" id="cd05570">
    <property type="entry name" value="STKc_PKC"/>
    <property type="match status" value="1"/>
</dbReference>
<dbReference type="FunFam" id="1.10.510.10:FF:000101">
    <property type="entry name" value="Protein kinase C"/>
    <property type="match status" value="1"/>
</dbReference>
<dbReference type="FunFam" id="3.30.200.20:FF:000103">
    <property type="entry name" value="Protein kinase C"/>
    <property type="match status" value="1"/>
</dbReference>
<dbReference type="FunFam" id="3.30.60.20:FF:000014">
    <property type="entry name" value="Protein kinase C"/>
    <property type="match status" value="1"/>
</dbReference>
<dbReference type="FunFam" id="3.30.60.20:FF:000034">
    <property type="entry name" value="Protein kinase C"/>
    <property type="match status" value="1"/>
</dbReference>
<dbReference type="Gene3D" id="3.30.60.20">
    <property type="match status" value="2"/>
</dbReference>
<dbReference type="Gene3D" id="1.10.287.160">
    <property type="entry name" value="HR1 repeat"/>
    <property type="match status" value="1"/>
</dbReference>
<dbReference type="Gene3D" id="3.30.200.20">
    <property type="entry name" value="Phosphorylase Kinase, domain 1"/>
    <property type="match status" value="1"/>
</dbReference>
<dbReference type="Gene3D" id="1.10.510.10">
    <property type="entry name" value="Transferase(Phosphotransferase) domain 1"/>
    <property type="match status" value="1"/>
</dbReference>
<dbReference type="InterPro" id="IPR000961">
    <property type="entry name" value="AGC-kinase_C"/>
</dbReference>
<dbReference type="InterPro" id="IPR046349">
    <property type="entry name" value="C1-like_sf"/>
</dbReference>
<dbReference type="InterPro" id="IPR000008">
    <property type="entry name" value="C2_dom"/>
</dbReference>
<dbReference type="InterPro" id="IPR035892">
    <property type="entry name" value="C2_domain_sf"/>
</dbReference>
<dbReference type="InterPro" id="IPR037778">
    <property type="entry name" value="C2_fungal_PKC"/>
</dbReference>
<dbReference type="InterPro" id="IPR011072">
    <property type="entry name" value="HR1_rho-bd"/>
</dbReference>
<dbReference type="InterPro" id="IPR036274">
    <property type="entry name" value="HR1_rpt_sf"/>
</dbReference>
<dbReference type="InterPro" id="IPR011009">
    <property type="entry name" value="Kinase-like_dom_sf"/>
</dbReference>
<dbReference type="InterPro" id="IPR002219">
    <property type="entry name" value="PE/DAG-bd"/>
</dbReference>
<dbReference type="InterPro" id="IPR037312">
    <property type="entry name" value="PKC-like_HR1"/>
</dbReference>
<dbReference type="InterPro" id="IPR017892">
    <property type="entry name" value="Pkinase_C"/>
</dbReference>
<dbReference type="InterPro" id="IPR000719">
    <property type="entry name" value="Prot_kinase_dom"/>
</dbReference>
<dbReference type="InterPro" id="IPR017441">
    <property type="entry name" value="Protein_kinase_ATP_BS"/>
</dbReference>
<dbReference type="InterPro" id="IPR008271">
    <property type="entry name" value="Ser/Thr_kinase_AS"/>
</dbReference>
<dbReference type="PANTHER" id="PTHR24351">
    <property type="entry name" value="RIBOSOMAL PROTEIN S6 KINASE"/>
    <property type="match status" value="1"/>
</dbReference>
<dbReference type="Pfam" id="PF00130">
    <property type="entry name" value="C1_1"/>
    <property type="match status" value="2"/>
</dbReference>
<dbReference type="Pfam" id="PF02185">
    <property type="entry name" value="HR1"/>
    <property type="match status" value="2"/>
</dbReference>
<dbReference type="Pfam" id="PF00069">
    <property type="entry name" value="Pkinase"/>
    <property type="match status" value="1"/>
</dbReference>
<dbReference type="Pfam" id="PF00433">
    <property type="entry name" value="Pkinase_C"/>
    <property type="match status" value="1"/>
</dbReference>
<dbReference type="SMART" id="SM00109">
    <property type="entry name" value="C1"/>
    <property type="match status" value="2"/>
</dbReference>
<dbReference type="SMART" id="SM00239">
    <property type="entry name" value="C2"/>
    <property type="match status" value="1"/>
</dbReference>
<dbReference type="SMART" id="SM00742">
    <property type="entry name" value="Hr1"/>
    <property type="match status" value="2"/>
</dbReference>
<dbReference type="SMART" id="SM00133">
    <property type="entry name" value="S_TK_X"/>
    <property type="match status" value="1"/>
</dbReference>
<dbReference type="SMART" id="SM00220">
    <property type="entry name" value="S_TKc"/>
    <property type="match status" value="1"/>
</dbReference>
<dbReference type="SUPFAM" id="SSF49562">
    <property type="entry name" value="C2 domain (Calcium/lipid-binding domain, CaLB)"/>
    <property type="match status" value="1"/>
</dbReference>
<dbReference type="SUPFAM" id="SSF57889">
    <property type="entry name" value="Cysteine-rich domain"/>
    <property type="match status" value="2"/>
</dbReference>
<dbReference type="SUPFAM" id="SSF46585">
    <property type="entry name" value="HR1 repeat"/>
    <property type="match status" value="1"/>
</dbReference>
<dbReference type="SUPFAM" id="SSF56112">
    <property type="entry name" value="Protein kinase-like (PK-like)"/>
    <property type="match status" value="1"/>
</dbReference>
<dbReference type="PROSITE" id="PS51285">
    <property type="entry name" value="AGC_KINASE_CTER"/>
    <property type="match status" value="1"/>
</dbReference>
<dbReference type="PROSITE" id="PS50004">
    <property type="entry name" value="C2"/>
    <property type="match status" value="1"/>
</dbReference>
<dbReference type="PROSITE" id="PS00107">
    <property type="entry name" value="PROTEIN_KINASE_ATP"/>
    <property type="match status" value="1"/>
</dbReference>
<dbReference type="PROSITE" id="PS50011">
    <property type="entry name" value="PROTEIN_KINASE_DOM"/>
    <property type="match status" value="1"/>
</dbReference>
<dbReference type="PROSITE" id="PS00108">
    <property type="entry name" value="PROTEIN_KINASE_ST"/>
    <property type="match status" value="1"/>
</dbReference>
<dbReference type="PROSITE" id="PS51860">
    <property type="entry name" value="REM_1"/>
    <property type="match status" value="2"/>
</dbReference>
<dbReference type="PROSITE" id="PS00479">
    <property type="entry name" value="ZF_DAG_PE_1"/>
    <property type="match status" value="2"/>
</dbReference>
<dbReference type="PROSITE" id="PS50081">
    <property type="entry name" value="ZF_DAG_PE_2"/>
    <property type="match status" value="2"/>
</dbReference>
<reference key="1">
    <citation type="submission" date="1997-03" db="EMBL/GenBank/DDBJ databases">
        <title>Molecular cloning of a protein kinase C homologue from Neurospora crassa.</title>
        <authorList>
            <person name="Arpaia G."/>
            <person name="Macino G."/>
        </authorList>
    </citation>
    <scope>NUCLEOTIDE SEQUENCE [GENOMIC DNA]</scope>
</reference>
<reference key="2">
    <citation type="journal article" date="2003" name="Nature">
        <title>The genome sequence of the filamentous fungus Neurospora crassa.</title>
        <authorList>
            <person name="Galagan J.E."/>
            <person name="Calvo S.E."/>
            <person name="Borkovich K.A."/>
            <person name="Selker E.U."/>
            <person name="Read N.D."/>
            <person name="Jaffe D.B."/>
            <person name="FitzHugh W."/>
            <person name="Ma L.-J."/>
            <person name="Smirnov S."/>
            <person name="Purcell S."/>
            <person name="Rehman B."/>
            <person name="Elkins T."/>
            <person name="Engels R."/>
            <person name="Wang S."/>
            <person name="Nielsen C.B."/>
            <person name="Butler J."/>
            <person name="Endrizzi M."/>
            <person name="Qui D."/>
            <person name="Ianakiev P."/>
            <person name="Bell-Pedersen D."/>
            <person name="Nelson M.A."/>
            <person name="Werner-Washburne M."/>
            <person name="Selitrennikoff C.P."/>
            <person name="Kinsey J.A."/>
            <person name="Braun E.L."/>
            <person name="Zelter A."/>
            <person name="Schulte U."/>
            <person name="Kothe G.O."/>
            <person name="Jedd G."/>
            <person name="Mewes H.-W."/>
            <person name="Staben C."/>
            <person name="Marcotte E."/>
            <person name="Greenberg D."/>
            <person name="Roy A."/>
            <person name="Foley K."/>
            <person name="Naylor J."/>
            <person name="Stange-Thomann N."/>
            <person name="Barrett R."/>
            <person name="Gnerre S."/>
            <person name="Kamal M."/>
            <person name="Kamvysselis M."/>
            <person name="Mauceli E.W."/>
            <person name="Bielke C."/>
            <person name="Rudd S."/>
            <person name="Frishman D."/>
            <person name="Krystofova S."/>
            <person name="Rasmussen C."/>
            <person name="Metzenberg R.L."/>
            <person name="Perkins D.D."/>
            <person name="Kroken S."/>
            <person name="Cogoni C."/>
            <person name="Macino G."/>
            <person name="Catcheside D.E.A."/>
            <person name="Li W."/>
            <person name="Pratt R.J."/>
            <person name="Osmani S.A."/>
            <person name="DeSouza C.P.C."/>
            <person name="Glass N.L."/>
            <person name="Orbach M.J."/>
            <person name="Berglund J.A."/>
            <person name="Voelker R."/>
            <person name="Yarden O."/>
            <person name="Plamann M."/>
            <person name="Seiler S."/>
            <person name="Dunlap J.C."/>
            <person name="Radford A."/>
            <person name="Aramayo R."/>
            <person name="Natvig D.O."/>
            <person name="Alex L.A."/>
            <person name="Mannhaupt G."/>
            <person name="Ebbole D.J."/>
            <person name="Freitag M."/>
            <person name="Paulsen I."/>
            <person name="Sachs M.S."/>
            <person name="Lander E.S."/>
            <person name="Nusbaum C."/>
            <person name="Birren B.W."/>
        </authorList>
    </citation>
    <scope>NUCLEOTIDE SEQUENCE [LARGE SCALE GENOMIC DNA]</scope>
    <source>
        <strain>ATCC 24698 / 74-OR23-1A / CBS 708.71 / DSM 1257 / FGSC 987</strain>
    </source>
</reference>
<proteinExistence type="inferred from homology"/>
<protein>
    <recommendedName>
        <fullName>Protein kinase C-like</fullName>
        <ecNumber>2.7.11.13</ecNumber>
    </recommendedName>
</protein>